<gene>
    <name type="primary">Ncl</name>
    <name type="synonym">Nuc</name>
</gene>
<comment type="function">
    <text evidence="1 11">Nucleolin is the major nucleolar protein of growing eukaryotic cells. It is found associated with intranucleolar chromatin and pre-ribosomal particles. It induces chromatin decondensation by binding to histone H1. It is thought to play a role in pre-rRNA transcription and ribosome assembly. May play a role in the process of transcriptional elongation. Binds RNA oligonucleotides with 5'-UUAGGG-3' repeats more tightly than the telomeric single-stranded DNA 5'-TTAGGG-3' repeats (By similarity).</text>
</comment>
<comment type="subunit">
    <text evidence="3 7 8 9 10 12">Identified in a IGF2BP1-dependent mRNP granule complex containing untranslated mRNAs (By similarity). Component of the SWAP complex that consists of NPM1, NCL/nucleolin, PARP1 and SWAP70 (PubMed:9642267). Component of a complex which is at least composed of HTATSF1/Tat-SF1, the P-TEFb complex components CDK9 and CCNT1, RNA polymerase II, SUPT5H, and NCL/nucleolin (By similarity). Interacts with AICDA (PubMed:21518874). Interacts with APTX (By similarity). Interacts with C1QBP (By similarity). Interacts with ERBB4 (By similarity). Interacts (via C-terminus) with FMR1 isoform 6 (via N-terminus) (By similarity). Interacts with GZF1; this interaction is important for nucleolar localization of GZF1 (By similarity). Interacts with NSUN2 (By similarity). Interacts with NVL (PubMed:21474449). Interacts (via N-terminus domain) with SETX (By similarity). Interacts (via RRM1 and C-terminal RRM4/Arg/Gly-rich domains) with TERT; the interaction is important for nucleolar localization of TERT (By similarity). Interacts with WDR46 (By similarity). Interacts with ZFP36 (By similarity). Interacts with LRRC34 (PubMed:24991885). Interacts with RRP1B (By similarity). Interacts with HNRNPU; this interaction occurs during mitosis (By similarity). Interacts with RIOK1; RIOK1 recruits NCL to PRMT5 for symmetrically methylation (By similarity). Interacts with ZBTB7B (PubMed:28784777). Interacts with MDK; this interaction promotes NCL clustering and lateral movements of this complex into lipid rafts leading to MDK internalization (By similarity). Interacts with HDGF (By similarity). Interacts with ALKBH2. Interacts with IGFBP5; this interaction is necessary for IGFBP5 localization to the nucleus (By similarity). Interacts with DDX24 (when ubiquitinated); this interaction may be important during ribosome biogenesis (By similarity).</text>
</comment>
<comment type="interaction">
    <interactant intactId="EBI-641864">
        <id>P09405</id>
    </interactant>
    <interactant intactId="EBI-8308696">
        <id>Q9CR42</id>
        <label>Ankrd1</label>
    </interactant>
    <organismsDiffer>false</organismsDiffer>
    <experiments>5</experiments>
</comment>
<comment type="interaction">
    <interactant intactId="EBI-641864">
        <id>P09405</id>
    </interactant>
    <interactant intactId="EBI-641852">
        <id>Q9DC51</id>
        <label>Gnai3</label>
    </interactant>
    <organismsDiffer>false</organismsDiffer>
    <experiments>4</experiments>
</comment>
<comment type="interaction">
    <interactant intactId="EBI-641864">
        <id>P09405</id>
    </interactant>
    <interactant intactId="EBI-1635228">
        <id>P63028</id>
        <label>Tpt1</label>
    </interactant>
    <organismsDiffer>false</organismsDiffer>
    <experiments>4</experiments>
</comment>
<comment type="subcellular location">
    <subcellularLocation>
        <location evidence="3">Nucleus</location>
        <location evidence="3">Nucleolus</location>
    </subcellularLocation>
    <subcellularLocation>
        <location evidence="1">Cytoplasm</location>
    </subcellularLocation>
    <text evidence="1">Localized in cytoplasmic mRNP granules containing untranslated mRNAs.</text>
</comment>
<comment type="tissue specificity">
    <text evidence="12">Expressed in B-cells that have been induced to switch to various Ig isotypes.</text>
</comment>
<comment type="PTM">
    <text>Some glutamate residues are glycylated by TTLL8. This modification occurs exclusively on glutamate residues and results in a glycine chain on the gamma-carboxyl group.</text>
</comment>
<comment type="PTM">
    <text evidence="3">Symmetrically methylated by PRMT5.</text>
</comment>
<keyword id="KW-0007">Acetylation</keyword>
<keyword id="KW-0963">Cytoplasm</keyword>
<keyword id="KW-0903">Direct protein sequencing</keyword>
<keyword id="KW-0238">DNA-binding</keyword>
<keyword id="KW-1017">Isopeptide bond</keyword>
<keyword id="KW-0488">Methylation</keyword>
<keyword id="KW-0539">Nucleus</keyword>
<keyword id="KW-0597">Phosphoprotein</keyword>
<keyword id="KW-1185">Reference proteome</keyword>
<keyword id="KW-0677">Repeat</keyword>
<keyword id="KW-0694">RNA-binding</keyword>
<keyword id="KW-0832">Ubl conjugation</keyword>
<sequence>MVKLAKAGKTHGEAKKMAPPPKEVEEDSEDEEMSEDEDDSSGEEEVVIPQKKGKKATTTPAKKVVVSQTKKAAVPTPAKKAAVTPGKKAVATPAKKNITPAKVIPTPGKKGAAQAKALVPTPGKKGAATPAKGAKNGKNAKKEDSDEDEDEEDEDDSDEDEDDEEEDEFEPPIVKGVKPAKAAPAAPASEDEEDDEDEDDEEDDDEEEEDDSEEEVMEITTAKGKKTPAKVVPMKAKSVAEEEDDEEEDEDDEDEDDEEEDDEDDDEEEEEEEPVKAAPGKRKKEMTKQKEAPEAKKQKVEGSEPTTPFNLFIGNLNPNKSVNELKFAISELFAKNDLAVVDVRTGTNRKFGYVDFESAEDLEKALELTGLKVFGNEIKLEKPKGRDSKKVRAARTLLAKNLSFNITEDELKEVFEDAMEIRLVSQDGKSKGIAYIEFKSEADAEKNLEEKQGAEIDGRSVSLYYTGEKGQRQERTGKTSTWSGESKTLVLSNLSYSATKETLEEVFEKATFIKVPQNPHGKPKGYAFIEFASFEDAKEALNSCNKMEIEGRTIRLELQGSNSRSQPSKTLFVKGLSEDTTEETLKESFEGSVRARIVTDRETGSSKGFGFVDFNSEEDAKAAKEAMEDGEIDGNKVTLDWAKPKGEGGFGGRGGGRGGFGGRGGGRGGRGGFGGRGRGGFGGRGGFRGGRGGGGDFKPQGKKTKFE</sequence>
<reference key="1">
    <citation type="journal article" date="1988" name="J. Mol. Biol.">
        <title>Structure of the mouse nucleolin gene. The complete sequence reveals that each RNA binding domain is encoded by two independent exons.</title>
        <authorList>
            <person name="Bourbon H.-M."/>
            <person name="Lapeyre B."/>
            <person name="Amalric F."/>
        </authorList>
    </citation>
    <scope>NUCLEOTIDE SEQUENCE [GENOMIC DNA]</scope>
    <source>
        <strain>BALB/cJ</strain>
    </source>
</reference>
<reference key="2">
    <citation type="journal article" date="2005" name="Science">
        <title>The transcriptional landscape of the mammalian genome.</title>
        <authorList>
            <person name="Carninci P."/>
            <person name="Kasukawa T."/>
            <person name="Katayama S."/>
            <person name="Gough J."/>
            <person name="Frith M.C."/>
            <person name="Maeda N."/>
            <person name="Oyama R."/>
            <person name="Ravasi T."/>
            <person name="Lenhard B."/>
            <person name="Wells C."/>
            <person name="Kodzius R."/>
            <person name="Shimokawa K."/>
            <person name="Bajic V.B."/>
            <person name="Brenner S.E."/>
            <person name="Batalov S."/>
            <person name="Forrest A.R."/>
            <person name="Zavolan M."/>
            <person name="Davis M.J."/>
            <person name="Wilming L.G."/>
            <person name="Aidinis V."/>
            <person name="Allen J.E."/>
            <person name="Ambesi-Impiombato A."/>
            <person name="Apweiler R."/>
            <person name="Aturaliya R.N."/>
            <person name="Bailey T.L."/>
            <person name="Bansal M."/>
            <person name="Baxter L."/>
            <person name="Beisel K.W."/>
            <person name="Bersano T."/>
            <person name="Bono H."/>
            <person name="Chalk A.M."/>
            <person name="Chiu K.P."/>
            <person name="Choudhary V."/>
            <person name="Christoffels A."/>
            <person name="Clutterbuck D.R."/>
            <person name="Crowe M.L."/>
            <person name="Dalla E."/>
            <person name="Dalrymple B.P."/>
            <person name="de Bono B."/>
            <person name="Della Gatta G."/>
            <person name="di Bernardo D."/>
            <person name="Down T."/>
            <person name="Engstrom P."/>
            <person name="Fagiolini M."/>
            <person name="Faulkner G."/>
            <person name="Fletcher C.F."/>
            <person name="Fukushima T."/>
            <person name="Furuno M."/>
            <person name="Futaki S."/>
            <person name="Gariboldi M."/>
            <person name="Georgii-Hemming P."/>
            <person name="Gingeras T.R."/>
            <person name="Gojobori T."/>
            <person name="Green R.E."/>
            <person name="Gustincich S."/>
            <person name="Harbers M."/>
            <person name="Hayashi Y."/>
            <person name="Hensch T.K."/>
            <person name="Hirokawa N."/>
            <person name="Hill D."/>
            <person name="Huminiecki L."/>
            <person name="Iacono M."/>
            <person name="Ikeo K."/>
            <person name="Iwama A."/>
            <person name="Ishikawa T."/>
            <person name="Jakt M."/>
            <person name="Kanapin A."/>
            <person name="Katoh M."/>
            <person name="Kawasawa Y."/>
            <person name="Kelso J."/>
            <person name="Kitamura H."/>
            <person name="Kitano H."/>
            <person name="Kollias G."/>
            <person name="Krishnan S.P."/>
            <person name="Kruger A."/>
            <person name="Kummerfeld S.K."/>
            <person name="Kurochkin I.V."/>
            <person name="Lareau L.F."/>
            <person name="Lazarevic D."/>
            <person name="Lipovich L."/>
            <person name="Liu J."/>
            <person name="Liuni S."/>
            <person name="McWilliam S."/>
            <person name="Madan Babu M."/>
            <person name="Madera M."/>
            <person name="Marchionni L."/>
            <person name="Matsuda H."/>
            <person name="Matsuzawa S."/>
            <person name="Miki H."/>
            <person name="Mignone F."/>
            <person name="Miyake S."/>
            <person name="Morris K."/>
            <person name="Mottagui-Tabar S."/>
            <person name="Mulder N."/>
            <person name="Nakano N."/>
            <person name="Nakauchi H."/>
            <person name="Ng P."/>
            <person name="Nilsson R."/>
            <person name="Nishiguchi S."/>
            <person name="Nishikawa S."/>
            <person name="Nori F."/>
            <person name="Ohara O."/>
            <person name="Okazaki Y."/>
            <person name="Orlando V."/>
            <person name="Pang K.C."/>
            <person name="Pavan W.J."/>
            <person name="Pavesi G."/>
            <person name="Pesole G."/>
            <person name="Petrovsky N."/>
            <person name="Piazza S."/>
            <person name="Reed J."/>
            <person name="Reid J.F."/>
            <person name="Ring B.Z."/>
            <person name="Ringwald M."/>
            <person name="Rost B."/>
            <person name="Ruan Y."/>
            <person name="Salzberg S.L."/>
            <person name="Sandelin A."/>
            <person name="Schneider C."/>
            <person name="Schoenbach C."/>
            <person name="Sekiguchi K."/>
            <person name="Semple C.A."/>
            <person name="Seno S."/>
            <person name="Sessa L."/>
            <person name="Sheng Y."/>
            <person name="Shibata Y."/>
            <person name="Shimada H."/>
            <person name="Shimada K."/>
            <person name="Silva D."/>
            <person name="Sinclair B."/>
            <person name="Sperling S."/>
            <person name="Stupka E."/>
            <person name="Sugiura K."/>
            <person name="Sultana R."/>
            <person name="Takenaka Y."/>
            <person name="Taki K."/>
            <person name="Tammoja K."/>
            <person name="Tan S.L."/>
            <person name="Tang S."/>
            <person name="Taylor M.S."/>
            <person name="Tegner J."/>
            <person name="Teichmann S.A."/>
            <person name="Ueda H.R."/>
            <person name="van Nimwegen E."/>
            <person name="Verardo R."/>
            <person name="Wei C.L."/>
            <person name="Yagi K."/>
            <person name="Yamanishi H."/>
            <person name="Zabarovsky E."/>
            <person name="Zhu S."/>
            <person name="Zimmer A."/>
            <person name="Hide W."/>
            <person name="Bult C."/>
            <person name="Grimmond S.M."/>
            <person name="Teasdale R.D."/>
            <person name="Liu E.T."/>
            <person name="Brusic V."/>
            <person name="Quackenbush J."/>
            <person name="Wahlestedt C."/>
            <person name="Mattick J.S."/>
            <person name="Hume D.A."/>
            <person name="Kai C."/>
            <person name="Sasaki D."/>
            <person name="Tomaru Y."/>
            <person name="Fukuda S."/>
            <person name="Kanamori-Katayama M."/>
            <person name="Suzuki M."/>
            <person name="Aoki J."/>
            <person name="Arakawa T."/>
            <person name="Iida J."/>
            <person name="Imamura K."/>
            <person name="Itoh M."/>
            <person name="Kato T."/>
            <person name="Kawaji H."/>
            <person name="Kawagashira N."/>
            <person name="Kawashima T."/>
            <person name="Kojima M."/>
            <person name="Kondo S."/>
            <person name="Konno H."/>
            <person name="Nakano K."/>
            <person name="Ninomiya N."/>
            <person name="Nishio T."/>
            <person name="Okada M."/>
            <person name="Plessy C."/>
            <person name="Shibata K."/>
            <person name="Shiraki T."/>
            <person name="Suzuki S."/>
            <person name="Tagami M."/>
            <person name="Waki K."/>
            <person name="Watahiki A."/>
            <person name="Okamura-Oho Y."/>
            <person name="Suzuki H."/>
            <person name="Kawai J."/>
            <person name="Hayashizaki Y."/>
        </authorList>
    </citation>
    <scope>NUCLEOTIDE SEQUENCE [LARGE SCALE MRNA]</scope>
    <source>
        <strain>C57BL/6J</strain>
        <tissue>Egg</tissue>
        <tissue>Lung</tissue>
        <tissue>Thymus</tissue>
    </source>
</reference>
<reference key="3">
    <citation type="journal article" date="2004" name="Genome Res.">
        <title>The status, quality, and expansion of the NIH full-length cDNA project: the Mammalian Gene Collection (MGC).</title>
        <authorList>
            <consortium name="The MGC Project Team"/>
        </authorList>
    </citation>
    <scope>NUCLEOTIDE SEQUENCE [LARGE SCALE MRNA]</scope>
    <source>
        <strain>Czech II</strain>
        <tissue>Mammary gland</tissue>
    </source>
</reference>
<reference key="4">
    <citation type="journal article" date="1988" name="Gene">
        <title>Sequence and structure of the nucleolin promoter in rodents: characterization of a strikingly conserved CpG island.</title>
        <authorList>
            <person name="Bourbon H.-M."/>
            <person name="Prudhomme M."/>
            <person name="Amalric F."/>
        </authorList>
    </citation>
    <scope>NUCLEOTIDE SEQUENCE [GENOMIC DNA] OF 1-45</scope>
</reference>
<reference key="5">
    <citation type="journal article" date="1991" name="J. Biol. Chem.">
        <title>Granzyme A binding to target cell proteins. Granzyme A binds to and cleaves nucleolin in vitro.</title>
        <authorList>
            <person name="Pasternack M.S."/>
            <person name="Bleier K.J."/>
            <person name="McInerney T.N."/>
        </authorList>
    </citation>
    <scope>PROTEIN SEQUENCE OF 2-24</scope>
</reference>
<reference key="6">
    <citation type="journal article" date="1994" name="Mol. Cell. Biol.">
        <title>Purification and characterization of nucleolin and its identification as a transcription repressor.</title>
        <authorList>
            <person name="Yang T.-H."/>
            <person name="Tsai W.-H."/>
            <person name="Lee Y.-M."/>
            <person name="Lei H.-Y."/>
            <person name="Lai M.-Y."/>
            <person name="Chen D.-S."/>
            <person name="Yeh N.-H."/>
            <person name="Lee S.-C."/>
        </authorList>
    </citation>
    <scope>PROTEIN SEQUENCE OF 2-19 AND 558-567</scope>
    <scope>FUNCTION</scope>
</reference>
<reference key="7">
    <citation type="submission" date="2009-01" db="UniProtKB">
        <authorList>
            <person name="Lubec G."/>
            <person name="Yang J.W."/>
            <person name="Zigmond M."/>
            <person name="Sunyer B."/>
            <person name="Chen W.-Q."/>
        </authorList>
    </citation>
    <scope>PROTEIN SEQUENCE OF 327-344; 351-364; 401-412; 432-439; 460-469; 488-500; 525-538; 575-586 AND 608-621</scope>
    <scope>IDENTIFICATION BY MASS SPECTROMETRY</scope>
    <source>
        <strain>OF1</strain>
        <tissue>Brain</tissue>
        <tissue>Hippocampus</tissue>
    </source>
</reference>
<reference key="8">
    <citation type="journal article" date="1998" name="J. Biol. Chem.">
        <title>A B-cell-specific DNA recombination complex.</title>
        <authorList>
            <person name="Borggrefe T."/>
            <person name="Wabl M."/>
            <person name="Akhmedov A.T."/>
            <person name="Jessberger R."/>
        </authorList>
    </citation>
    <scope>IDENTIFICATION IN SWAP COMPLEX</scope>
    <scope>TISSUE SPECIFICITY</scope>
    <source>
        <strain>C57BL/6J</strain>
        <tissue>Spleen</tissue>
    </source>
</reference>
<reference key="9">
    <citation type="journal article" date="2007" name="J. Proteome Res.">
        <title>A differential phosphoproteomic analysis of retinoic acid-treated P19 cells.</title>
        <authorList>
            <person name="Smith J.C."/>
            <person name="Duchesne M.A."/>
            <person name="Tozzi P."/>
            <person name="Ethier M."/>
            <person name="Figeys D."/>
        </authorList>
    </citation>
    <scope>PHOSPHORYLATION [LARGE SCALE ANALYSIS] AT SER-145 AND SER-157</scope>
    <scope>IDENTIFICATION BY MASS SPECTROMETRY [LARGE SCALE ANALYSIS]</scope>
    <source>
        <tissue>Teratocarcinoma</tissue>
    </source>
</reference>
<reference key="10">
    <citation type="journal article" date="2007" name="Proc. Natl. Acad. Sci. U.S.A.">
        <title>Large-scale phosphorylation analysis of mouse liver.</title>
        <authorList>
            <person name="Villen J."/>
            <person name="Beausoleil S.A."/>
            <person name="Gerber S.A."/>
            <person name="Gygi S.P."/>
        </authorList>
    </citation>
    <scope>PHOSPHORYLATION [LARGE SCALE ANALYSIS] AT SER-28; SER-34; SER-40; SER-41 AND SER-145</scope>
    <scope>IDENTIFICATION BY MASS SPECTROMETRY [LARGE SCALE ANALYSIS]</scope>
    <source>
        <tissue>Liver</tissue>
    </source>
</reference>
<reference key="11">
    <citation type="journal article" date="2009" name="Cell">
        <title>Evolutionary divergence of enzymatic mechanisms for posttranslational polyglycylation.</title>
        <authorList>
            <person name="Rogowski K."/>
            <person name="Juge F."/>
            <person name="van Dijk J."/>
            <person name="Wloga D."/>
            <person name="Strub J.-M."/>
            <person name="Levilliers N."/>
            <person name="Thomas D."/>
            <person name="Bre M.-H."/>
            <person name="Van Dorsselaer A."/>
            <person name="Gaertig J."/>
            <person name="Janke C."/>
        </authorList>
    </citation>
    <scope>GLYCYLATION</scope>
</reference>
<reference key="12">
    <citation type="journal article" date="2009" name="Immunity">
        <title>The phagosomal proteome in interferon-gamma-activated macrophages.</title>
        <authorList>
            <person name="Trost M."/>
            <person name="English L."/>
            <person name="Lemieux S."/>
            <person name="Courcelles M."/>
            <person name="Desjardins M."/>
            <person name="Thibault P."/>
        </authorList>
    </citation>
    <scope>PHOSPHORYLATION [LARGE SCALE ANALYSIS] AT SER-28; SER-34; SER-40; SER-41 AND SER-403</scope>
    <scope>IDENTIFICATION BY MASS SPECTROMETRY [LARGE SCALE ANALYSIS]</scope>
</reference>
<reference key="13">
    <citation type="journal article" date="2010" name="Cell">
        <title>A tissue-specific atlas of mouse protein phosphorylation and expression.</title>
        <authorList>
            <person name="Huttlin E.L."/>
            <person name="Jedrychowski M.P."/>
            <person name="Elias J.E."/>
            <person name="Goswami T."/>
            <person name="Rad R."/>
            <person name="Beausoleil S.A."/>
            <person name="Villen J."/>
            <person name="Haas W."/>
            <person name="Sowa M.E."/>
            <person name="Gygi S.P."/>
        </authorList>
    </citation>
    <scope>PHOSPHORYLATION [LARGE SCALE ANALYSIS] AT SER-28; SER-34; SER-40; SER-41; SER-145; SER-157; SER-189; SER-212; SER-303; SER-403; SER-460 AND SER-616</scope>
    <scope>IDENTIFICATION BY MASS SPECTROMETRY [LARGE SCALE ANALYSIS]</scope>
    <source>
        <tissue>Brain</tissue>
        <tissue>Brown adipose tissue</tissue>
        <tissue>Heart</tissue>
        <tissue>Kidney</tissue>
        <tissue>Liver</tissue>
        <tissue>Lung</tissue>
        <tissue>Pancreas</tissue>
        <tissue>Spleen</tissue>
        <tissue>Testis</tissue>
    </source>
</reference>
<reference key="14">
    <citation type="journal article" date="2011" name="J. Biol. Chem.">
        <title>Structure and function of the N-terminal nucleolin binding domain of nuclear valosin-containing protein-like 2 (NVL2) harboring a nucleolar localization signal.</title>
        <authorList>
            <person name="Fujiwara Y."/>
            <person name="Fujiwara K."/>
            <person name="Goda N."/>
            <person name="Iwaya N."/>
            <person name="Tenno T."/>
            <person name="Shirakawa M."/>
            <person name="Hiroaki H."/>
        </authorList>
    </citation>
    <scope>INTERACTION WITH NVL</scope>
</reference>
<reference key="15">
    <citation type="journal article" date="2011" name="Proc. Natl. Acad. Sci. U.S.A.">
        <title>Histone chaperone Spt6 is required for class switch recombination but not somatic hypermutation.</title>
        <authorList>
            <person name="Okazaki I.M."/>
            <person name="Okawa K."/>
            <person name="Kobayashi M."/>
            <person name="Yoshikawa K."/>
            <person name="Kawamoto S."/>
            <person name="Nagaoka H."/>
            <person name="Shinkura R."/>
            <person name="Kitawaki Y."/>
            <person name="Taniguchi H."/>
            <person name="Natsume T."/>
            <person name="Iemura S."/>
            <person name="Honjo T."/>
        </authorList>
    </citation>
    <scope>INTERACTION WITH AICDA</scope>
</reference>
<reference key="16">
    <citation type="journal article" date="2013" name="Mol. Cell">
        <title>SIRT5-mediated lysine desuccinylation impacts diverse metabolic pathways.</title>
        <authorList>
            <person name="Park J."/>
            <person name="Chen Y."/>
            <person name="Tishkoff D.X."/>
            <person name="Peng C."/>
            <person name="Tan M."/>
            <person name="Dai L."/>
            <person name="Xie Z."/>
            <person name="Zhang Y."/>
            <person name="Zwaans B.M."/>
            <person name="Skinner M.E."/>
            <person name="Lombard D.B."/>
            <person name="Zhao Y."/>
        </authorList>
    </citation>
    <scope>ACETYLATION [LARGE SCALE ANALYSIS] AT LYS-9; LYS-15; LYS-16; LYS-96; LYS-102; LYS-109; LYS-116; LYS-350; LYS-429; LYS-446; LYS-469; LYS-478; LYS-522; LYS-574 AND LYS-643</scope>
    <scope>IDENTIFICATION BY MASS SPECTROMETRY [LARGE SCALE ANALYSIS]</scope>
    <source>
        <tissue>Embryonic fibroblast</tissue>
    </source>
</reference>
<reference key="17">
    <citation type="journal article" date="2014" name="Mol. Cell. Proteomics">
        <title>Immunoaffinity enrichment and mass spectrometry analysis of protein methylation.</title>
        <authorList>
            <person name="Guo A."/>
            <person name="Gu H."/>
            <person name="Zhou J."/>
            <person name="Mulhern D."/>
            <person name="Wang Y."/>
            <person name="Lee K.A."/>
            <person name="Yang V."/>
            <person name="Aguiar M."/>
            <person name="Kornhauser J."/>
            <person name="Jia X."/>
            <person name="Ren J."/>
            <person name="Beausoleil S.A."/>
            <person name="Silva J.C."/>
            <person name="Vemulapalli V."/>
            <person name="Bedford M.T."/>
            <person name="Comb M.J."/>
        </authorList>
    </citation>
    <scope>METHYLATION [LARGE SCALE ANALYSIS] AT ARG-691</scope>
    <scope>IDENTIFICATION BY MASS SPECTROMETRY [LARGE SCALE ANALYSIS]</scope>
    <source>
        <tissue>Brain</tissue>
    </source>
</reference>
<reference key="18">
    <citation type="journal article" date="2014" name="Stem Cells Dev.">
        <title>Lrrc34, a novel nucleolar protein, interacts with npm1 and ncl and has an impact on pluripotent stem cells.</title>
        <authorList>
            <person name="Luehrig S."/>
            <person name="Siamishi I."/>
            <person name="Tesmer-Wolf M."/>
            <person name="Zechner U."/>
            <person name="Engel W."/>
            <person name="Nolte J."/>
        </authorList>
    </citation>
    <scope>INTERACTION WITH LRRC34</scope>
</reference>
<reference key="19">
    <citation type="journal article" date="2017" name="Proc. Natl. Acad. Sci. U.S.A.">
        <title>Zbtb7b engages the long noncoding RNA Blnc1 to drive brown and beige fat development and thermogenesis.</title>
        <authorList>
            <person name="Li S."/>
            <person name="Mi L."/>
            <person name="Yu L."/>
            <person name="Yu Q."/>
            <person name="Liu T."/>
            <person name="Wang G.X."/>
            <person name="Zhao X.Y."/>
            <person name="Wu J."/>
            <person name="Lin J.D."/>
        </authorList>
    </citation>
    <scope>INTERACTION WITH ZBTB7B</scope>
</reference>
<proteinExistence type="evidence at protein level"/>
<protein>
    <recommendedName>
        <fullName>Nucleolin</fullName>
    </recommendedName>
    <alternativeName>
        <fullName>Protein C23</fullName>
    </alternativeName>
</protein>
<organism>
    <name type="scientific">Mus musculus</name>
    <name type="common">Mouse</name>
    <dbReference type="NCBI Taxonomy" id="10090"/>
    <lineage>
        <taxon>Eukaryota</taxon>
        <taxon>Metazoa</taxon>
        <taxon>Chordata</taxon>
        <taxon>Craniata</taxon>
        <taxon>Vertebrata</taxon>
        <taxon>Euteleostomi</taxon>
        <taxon>Mammalia</taxon>
        <taxon>Eutheria</taxon>
        <taxon>Euarchontoglires</taxon>
        <taxon>Glires</taxon>
        <taxon>Rodentia</taxon>
        <taxon>Myomorpha</taxon>
        <taxon>Muroidea</taxon>
        <taxon>Muridae</taxon>
        <taxon>Murinae</taxon>
        <taxon>Mus</taxon>
        <taxon>Mus</taxon>
    </lineage>
</organism>
<accession>P09405</accession>
<accession>Q548M9</accession>
<accession>Q61991</accession>
<accession>Q8BQD8</accession>
<accession>Q99K50</accession>
<name>NUCL_MOUSE</name>
<dbReference type="EMBL" id="X07699">
    <property type="protein sequence ID" value="CAA30538.1"/>
    <property type="molecule type" value="Genomic_DNA"/>
</dbReference>
<dbReference type="EMBL" id="AF318184">
    <property type="protein sequence ID" value="AAK07920.1"/>
    <property type="molecule type" value="mRNA"/>
</dbReference>
<dbReference type="EMBL" id="AK050958">
    <property type="protein sequence ID" value="BAC34476.1"/>
    <property type="molecule type" value="mRNA"/>
</dbReference>
<dbReference type="EMBL" id="AK083307">
    <property type="protein sequence ID" value="BAC38858.1"/>
    <property type="molecule type" value="mRNA"/>
</dbReference>
<dbReference type="EMBL" id="AK144894">
    <property type="protein sequence ID" value="BAE26119.1"/>
    <property type="molecule type" value="mRNA"/>
</dbReference>
<dbReference type="EMBL" id="AK161706">
    <property type="protein sequence ID" value="BAE36542.1"/>
    <property type="molecule type" value="mRNA"/>
</dbReference>
<dbReference type="EMBL" id="AK163275">
    <property type="protein sequence ID" value="BAE37270.1"/>
    <property type="molecule type" value="mRNA"/>
</dbReference>
<dbReference type="EMBL" id="BC005460">
    <property type="protein sequence ID" value="AAH05460.1"/>
    <property type="molecule type" value="mRNA"/>
</dbReference>
<dbReference type="EMBL" id="M22089">
    <property type="protein sequence ID" value="AAA39841.1"/>
    <property type="molecule type" value="Genomic_DNA"/>
</dbReference>
<dbReference type="CCDS" id="CCDS35646.1"/>
<dbReference type="PIR" id="A29958">
    <property type="entry name" value="DNMS"/>
</dbReference>
<dbReference type="RefSeq" id="NP_035010.3">
    <property type="nucleotide sequence ID" value="NM_010880.3"/>
</dbReference>
<dbReference type="SMR" id="P09405"/>
<dbReference type="BioGRID" id="201706">
    <property type="interactions" value="97"/>
</dbReference>
<dbReference type="CORUM" id="P09405"/>
<dbReference type="FunCoup" id="P09405">
    <property type="interactions" value="2926"/>
</dbReference>
<dbReference type="IntAct" id="P09405">
    <property type="interactions" value="19"/>
</dbReference>
<dbReference type="MINT" id="P09405"/>
<dbReference type="STRING" id="10090.ENSMUSP00000027438"/>
<dbReference type="GlyGen" id="P09405">
    <property type="glycosylation" value="6 sites, 1 N-linked glycan (1 site), 1 O-linked glycan (1 site)"/>
</dbReference>
<dbReference type="iPTMnet" id="P09405"/>
<dbReference type="MetOSite" id="P09405"/>
<dbReference type="PhosphoSitePlus" id="P09405"/>
<dbReference type="SwissPalm" id="P09405"/>
<dbReference type="REPRODUCTION-2DPAGE" id="P09405"/>
<dbReference type="jPOST" id="P09405"/>
<dbReference type="PaxDb" id="10090-ENSMUSP00000027438"/>
<dbReference type="PeptideAtlas" id="P09405"/>
<dbReference type="ProteomicsDB" id="291922"/>
<dbReference type="Pumba" id="P09405"/>
<dbReference type="TopDownProteomics" id="P09405"/>
<dbReference type="Antibodypedia" id="3779">
    <property type="antibodies" value="918 antibodies from 42 providers"/>
</dbReference>
<dbReference type="DNASU" id="17975"/>
<dbReference type="Ensembl" id="ENSMUST00000027438.8">
    <property type="protein sequence ID" value="ENSMUSP00000027438.7"/>
    <property type="gene ID" value="ENSMUSG00000026234.13"/>
</dbReference>
<dbReference type="GeneID" id="17975"/>
<dbReference type="KEGG" id="mmu:17975"/>
<dbReference type="UCSC" id="uc007bvl.1">
    <property type="organism name" value="mouse"/>
</dbReference>
<dbReference type="AGR" id="MGI:97286"/>
<dbReference type="CTD" id="4691"/>
<dbReference type="MGI" id="MGI:97286">
    <property type="gene designation" value="Ncl"/>
</dbReference>
<dbReference type="VEuPathDB" id="HostDB:ENSMUSG00000026234"/>
<dbReference type="eggNOG" id="KOG0123">
    <property type="taxonomic scope" value="Eukaryota"/>
</dbReference>
<dbReference type="GeneTree" id="ENSGT00940000157437"/>
<dbReference type="HOGENOM" id="CLU_026300_1_0_1"/>
<dbReference type="InParanoid" id="P09405"/>
<dbReference type="OMA" id="EIRIVMN"/>
<dbReference type="OrthoDB" id="167718at2759"/>
<dbReference type="PhylomeDB" id="P09405"/>
<dbReference type="TreeFam" id="TF328499"/>
<dbReference type="Reactome" id="R-MMU-6791226">
    <property type="pathway name" value="Major pathway of rRNA processing in the nucleolus and cytosol"/>
</dbReference>
<dbReference type="BioGRID-ORCS" id="17975">
    <property type="hits" value="29 hits in 83 CRISPR screens"/>
</dbReference>
<dbReference type="CD-CODE" id="764D0258">
    <property type="entry name" value="Neuronal RNP granule"/>
</dbReference>
<dbReference type="CD-CODE" id="DE1E139C">
    <property type="entry name" value="Chromatoid body"/>
</dbReference>
<dbReference type="ChiTaRS" id="Ncl">
    <property type="organism name" value="mouse"/>
</dbReference>
<dbReference type="PRO" id="PR:P09405"/>
<dbReference type="Proteomes" id="UP000000589">
    <property type="component" value="Chromosome 1"/>
</dbReference>
<dbReference type="RNAct" id="P09405">
    <property type="molecule type" value="protein"/>
</dbReference>
<dbReference type="Bgee" id="ENSMUSG00000026234">
    <property type="expression patterns" value="Expressed in embryonic post-anal tail and 99 other cell types or tissues"/>
</dbReference>
<dbReference type="ExpressionAtlas" id="P09405">
    <property type="expression patterns" value="baseline and differential"/>
</dbReference>
<dbReference type="GO" id="GO:0005938">
    <property type="term" value="C:cell cortex"/>
    <property type="evidence" value="ECO:0007669"/>
    <property type="project" value="Ensembl"/>
</dbReference>
<dbReference type="GO" id="GO:0005694">
    <property type="term" value="C:chromosome"/>
    <property type="evidence" value="ECO:0007669"/>
    <property type="project" value="Ensembl"/>
</dbReference>
<dbReference type="GO" id="GO:0001533">
    <property type="term" value="C:cornified envelope"/>
    <property type="evidence" value="ECO:0000314"/>
    <property type="project" value="MGI"/>
</dbReference>
<dbReference type="GO" id="GO:0036464">
    <property type="term" value="C:cytoplasmic ribonucleoprotein granule"/>
    <property type="evidence" value="ECO:0007669"/>
    <property type="project" value="Ensembl"/>
</dbReference>
<dbReference type="GO" id="GO:0005730">
    <property type="term" value="C:nucleolus"/>
    <property type="evidence" value="ECO:0000314"/>
    <property type="project" value="MGI"/>
</dbReference>
<dbReference type="GO" id="GO:0005654">
    <property type="term" value="C:nucleoplasm"/>
    <property type="evidence" value="ECO:0000314"/>
    <property type="project" value="MGI"/>
</dbReference>
<dbReference type="GO" id="GO:0005634">
    <property type="term" value="C:nucleus"/>
    <property type="evidence" value="ECO:0000314"/>
    <property type="project" value="MGI"/>
</dbReference>
<dbReference type="GO" id="GO:1990904">
    <property type="term" value="C:ribonucleoprotein complex"/>
    <property type="evidence" value="ECO:0000250"/>
    <property type="project" value="UniProtKB"/>
</dbReference>
<dbReference type="GO" id="GO:0044547">
    <property type="term" value="F:DNA topoisomerase binding"/>
    <property type="evidence" value="ECO:0007669"/>
    <property type="project" value="Ensembl"/>
</dbReference>
<dbReference type="GO" id="GO:0042802">
    <property type="term" value="F:identical protein binding"/>
    <property type="evidence" value="ECO:0007669"/>
    <property type="project" value="Ensembl"/>
</dbReference>
<dbReference type="GO" id="GO:0043560">
    <property type="term" value="F:insulin receptor substrate binding"/>
    <property type="evidence" value="ECO:0000353"/>
    <property type="project" value="MGI"/>
</dbReference>
<dbReference type="GO" id="GO:0048027">
    <property type="term" value="F:mRNA 5'-UTR binding"/>
    <property type="evidence" value="ECO:0007669"/>
    <property type="project" value="Ensembl"/>
</dbReference>
<dbReference type="GO" id="GO:0042731">
    <property type="term" value="F:PH domain binding"/>
    <property type="evidence" value="ECO:0000353"/>
    <property type="project" value="MGI"/>
</dbReference>
<dbReference type="GO" id="GO:0003723">
    <property type="term" value="F:RNA binding"/>
    <property type="evidence" value="ECO:0000314"/>
    <property type="project" value="MGI"/>
</dbReference>
<dbReference type="GO" id="GO:0042162">
    <property type="term" value="F:telomeric DNA binding"/>
    <property type="evidence" value="ECO:0000250"/>
    <property type="project" value="UniProtKB"/>
</dbReference>
<dbReference type="GO" id="GO:0001525">
    <property type="term" value="P:angiogenesis"/>
    <property type="evidence" value="ECO:0007669"/>
    <property type="project" value="Ensembl"/>
</dbReference>
<dbReference type="GO" id="GO:0071364">
    <property type="term" value="P:cellular response to epidermal growth factor stimulus"/>
    <property type="evidence" value="ECO:0000314"/>
    <property type="project" value="MGI"/>
</dbReference>
<dbReference type="GO" id="GO:1990830">
    <property type="term" value="P:cellular response to leukemia inhibitory factor"/>
    <property type="evidence" value="ECO:0000270"/>
    <property type="project" value="MGI"/>
</dbReference>
<dbReference type="GO" id="GO:0046627">
    <property type="term" value="P:negative regulation of insulin receptor signaling pathway"/>
    <property type="evidence" value="ECO:0000314"/>
    <property type="project" value="MGI"/>
</dbReference>
<dbReference type="GO" id="GO:0017148">
    <property type="term" value="P:negative regulation of translation"/>
    <property type="evidence" value="ECO:0007669"/>
    <property type="project" value="Ensembl"/>
</dbReference>
<dbReference type="GO" id="GO:0045944">
    <property type="term" value="P:positive regulation of transcription by RNA polymerase II"/>
    <property type="evidence" value="ECO:0000316"/>
    <property type="project" value="MGI"/>
</dbReference>
<dbReference type="GO" id="GO:1901838">
    <property type="term" value="P:positive regulation of transcription of nucleolar large rRNA by RNA polymerase I"/>
    <property type="evidence" value="ECO:0007669"/>
    <property type="project" value="Ensembl"/>
</dbReference>
<dbReference type="CDD" id="cd12403">
    <property type="entry name" value="RRM1_NCL"/>
    <property type="match status" value="1"/>
</dbReference>
<dbReference type="CDD" id="cd12404">
    <property type="entry name" value="RRM2_NCL"/>
    <property type="match status" value="1"/>
</dbReference>
<dbReference type="CDD" id="cd12405">
    <property type="entry name" value="RRM3_NCL"/>
    <property type="match status" value="1"/>
</dbReference>
<dbReference type="CDD" id="cd12406">
    <property type="entry name" value="RRM4_NCL"/>
    <property type="match status" value="1"/>
</dbReference>
<dbReference type="FunFam" id="3.30.70.330:FF:000278">
    <property type="entry name" value="Nucleolin"/>
    <property type="match status" value="1"/>
</dbReference>
<dbReference type="FunFam" id="3.30.70.330:FF:001072">
    <property type="entry name" value="Nucleolin"/>
    <property type="match status" value="1"/>
</dbReference>
<dbReference type="FunFam" id="3.30.70.330:FF:000264">
    <property type="entry name" value="nucleolin"/>
    <property type="match status" value="1"/>
</dbReference>
<dbReference type="FunFam" id="3.30.70.330:FF:000265">
    <property type="entry name" value="nucleolin isoform X1"/>
    <property type="match status" value="1"/>
</dbReference>
<dbReference type="Gene3D" id="3.30.70.330">
    <property type="match status" value="4"/>
</dbReference>
<dbReference type="InterPro" id="IPR034230">
    <property type="entry name" value="Nucleolin_RRM1"/>
</dbReference>
<dbReference type="InterPro" id="IPR034233">
    <property type="entry name" value="Nucleolin_RRM2"/>
</dbReference>
<dbReference type="InterPro" id="IPR034234">
    <property type="entry name" value="Nucleolin_RRM3"/>
</dbReference>
<dbReference type="InterPro" id="IPR034235">
    <property type="entry name" value="Nucleolin_RRM4"/>
</dbReference>
<dbReference type="InterPro" id="IPR012677">
    <property type="entry name" value="Nucleotide-bd_a/b_plait_sf"/>
</dbReference>
<dbReference type="InterPro" id="IPR035979">
    <property type="entry name" value="RBD_domain_sf"/>
</dbReference>
<dbReference type="InterPro" id="IPR000504">
    <property type="entry name" value="RRM_dom"/>
</dbReference>
<dbReference type="PANTHER" id="PTHR23236">
    <property type="entry name" value="EUKARYOTIC TRANSLATION INITIATION FACTOR 4B/4H"/>
    <property type="match status" value="1"/>
</dbReference>
<dbReference type="PANTHER" id="PTHR23236:SF119">
    <property type="entry name" value="NUCLEAR RNA-BINDING PROTEIN SART-3"/>
    <property type="match status" value="1"/>
</dbReference>
<dbReference type="Pfam" id="PF00076">
    <property type="entry name" value="RRM_1"/>
    <property type="match status" value="4"/>
</dbReference>
<dbReference type="SMART" id="SM00360">
    <property type="entry name" value="RRM"/>
    <property type="match status" value="4"/>
</dbReference>
<dbReference type="SUPFAM" id="SSF54928">
    <property type="entry name" value="RNA-binding domain, RBD"/>
    <property type="match status" value="4"/>
</dbReference>
<dbReference type="PROSITE" id="PS50102">
    <property type="entry name" value="RRM"/>
    <property type="match status" value="4"/>
</dbReference>
<evidence type="ECO:0000250" key="1"/>
<evidence type="ECO:0000250" key="2">
    <source>
        <dbReference type="UniProtKB" id="P08199"/>
    </source>
</evidence>
<evidence type="ECO:0000250" key="3">
    <source>
        <dbReference type="UniProtKB" id="P19338"/>
    </source>
</evidence>
<evidence type="ECO:0000255" key="4">
    <source>
        <dbReference type="PROSITE-ProRule" id="PRU00176"/>
    </source>
</evidence>
<evidence type="ECO:0000256" key="5">
    <source>
        <dbReference type="SAM" id="MobiDB-lite"/>
    </source>
</evidence>
<evidence type="ECO:0000269" key="6">
    <source>
    </source>
</evidence>
<evidence type="ECO:0000269" key="7">
    <source>
    </source>
</evidence>
<evidence type="ECO:0000269" key="8">
    <source>
    </source>
</evidence>
<evidence type="ECO:0000269" key="9">
    <source>
    </source>
</evidence>
<evidence type="ECO:0000269" key="10">
    <source>
    </source>
</evidence>
<evidence type="ECO:0000269" key="11">
    <source>
    </source>
</evidence>
<evidence type="ECO:0000269" key="12">
    <source>
    </source>
</evidence>
<evidence type="ECO:0000305" key="13"/>
<evidence type="ECO:0007744" key="14">
    <source>
    </source>
</evidence>
<evidence type="ECO:0007744" key="15">
    <source>
    </source>
</evidence>
<evidence type="ECO:0007744" key="16">
    <source>
    </source>
</evidence>
<evidence type="ECO:0007744" key="17">
    <source>
    </source>
</evidence>
<evidence type="ECO:0007744" key="18">
    <source>
    </source>
</evidence>
<evidence type="ECO:0007744" key="19">
    <source>
    </source>
</evidence>
<feature type="initiator methionine" description="Removed" evidence="6 11">
    <location>
        <position position="1"/>
    </location>
</feature>
<feature type="chain" id="PRO_0000081693" description="Nucleolin">
    <location>
        <begin position="2"/>
        <end position="707"/>
    </location>
</feature>
<feature type="repeat" description="1">
    <location>
        <begin position="58"/>
        <end position="65"/>
    </location>
</feature>
<feature type="repeat" description="2">
    <location>
        <begin position="75"/>
        <end position="82"/>
    </location>
</feature>
<feature type="repeat" description="3">
    <location>
        <begin position="83"/>
        <end position="90"/>
    </location>
</feature>
<feature type="repeat" description="4">
    <location>
        <begin position="91"/>
        <end position="98"/>
    </location>
</feature>
<feature type="repeat" description="5; truncated">
    <location>
        <begin position="99"/>
        <end position="104"/>
    </location>
</feature>
<feature type="repeat" description="6">
    <location>
        <begin position="105"/>
        <end position="112"/>
    </location>
</feature>
<feature type="repeat" description="7">
    <location>
        <begin position="120"/>
        <end position="127"/>
    </location>
</feature>
<feature type="repeat" description="8">
    <location>
        <begin position="128"/>
        <end position="135"/>
    </location>
</feature>
<feature type="domain" description="RRM 1" evidence="4">
    <location>
        <begin position="309"/>
        <end position="385"/>
    </location>
</feature>
<feature type="domain" description="RRM 2" evidence="4">
    <location>
        <begin position="395"/>
        <end position="468"/>
    </location>
</feature>
<feature type="domain" description="RRM 3" evidence="4">
    <location>
        <begin position="487"/>
        <end position="561"/>
    </location>
</feature>
<feature type="domain" description="RRM 4" evidence="4">
    <location>
        <begin position="569"/>
        <end position="644"/>
    </location>
</feature>
<feature type="region of interest" description="Disordered" evidence="5">
    <location>
        <begin position="1"/>
        <end position="308"/>
    </location>
</feature>
<feature type="region of interest" description="8 X 8 AA tandem repeats of X-T-P-X-K-K-X-X">
    <location>
        <begin position="58"/>
        <end position="135"/>
    </location>
</feature>
<feature type="region of interest" description="Disordered" evidence="5">
    <location>
        <begin position="639"/>
        <end position="707"/>
    </location>
</feature>
<feature type="compositionally biased region" description="Acidic residues" evidence="5">
    <location>
        <begin position="24"/>
        <end position="46"/>
    </location>
</feature>
<feature type="compositionally biased region" description="Low complexity" evidence="5">
    <location>
        <begin position="56"/>
        <end position="92"/>
    </location>
</feature>
<feature type="compositionally biased region" description="Low complexity" evidence="5">
    <location>
        <begin position="121"/>
        <end position="137"/>
    </location>
</feature>
<feature type="compositionally biased region" description="Acidic residues" evidence="5">
    <location>
        <begin position="145"/>
        <end position="170"/>
    </location>
</feature>
<feature type="compositionally biased region" description="Low complexity" evidence="5">
    <location>
        <begin position="179"/>
        <end position="188"/>
    </location>
</feature>
<feature type="compositionally biased region" description="Acidic residues" evidence="5">
    <location>
        <begin position="189"/>
        <end position="217"/>
    </location>
</feature>
<feature type="compositionally biased region" description="Acidic residues" evidence="5">
    <location>
        <begin position="241"/>
        <end position="273"/>
    </location>
</feature>
<feature type="compositionally biased region" description="Basic and acidic residues" evidence="5">
    <location>
        <begin position="286"/>
        <end position="302"/>
    </location>
</feature>
<feature type="compositionally biased region" description="Gly residues" evidence="5">
    <location>
        <begin position="647"/>
        <end position="696"/>
    </location>
</feature>
<feature type="modified residue" description="N6-acetyllysine" evidence="18">
    <location>
        <position position="9"/>
    </location>
</feature>
<feature type="modified residue" description="N6-acetyllysine" evidence="18">
    <location>
        <position position="15"/>
    </location>
</feature>
<feature type="modified residue" description="N6-acetyllysine" evidence="18">
    <location>
        <position position="16"/>
    </location>
</feature>
<feature type="modified residue" description="Phosphoserine" evidence="14 16 17">
    <location>
        <position position="28"/>
    </location>
</feature>
<feature type="modified residue" description="Phosphoserine" evidence="14 16 17">
    <location>
        <position position="34"/>
    </location>
</feature>
<feature type="modified residue" description="Phosphoserine" evidence="14 16 17">
    <location>
        <position position="40"/>
    </location>
</feature>
<feature type="modified residue" description="Phosphoserine" evidence="14 16 17">
    <location>
        <position position="41"/>
    </location>
</feature>
<feature type="modified residue" description="Phosphoserine" evidence="3">
    <location>
        <position position="67"/>
    </location>
</feature>
<feature type="modified residue" description="Phosphothreonine" evidence="3">
    <location>
        <position position="69"/>
    </location>
</feature>
<feature type="modified residue" description="Phosphothreonine" evidence="3">
    <location>
        <position position="76"/>
    </location>
</feature>
<feature type="modified residue" description="Phosphothreonine" evidence="3">
    <location>
        <position position="84"/>
    </location>
</feature>
<feature type="modified residue" description="Phosphothreonine" evidence="3">
    <location>
        <position position="92"/>
    </location>
</feature>
<feature type="modified residue" description="N6-acetyllysine" evidence="18">
    <location>
        <position position="96"/>
    </location>
</feature>
<feature type="modified residue" description="Phosphothreonine" evidence="3">
    <location>
        <position position="99"/>
    </location>
</feature>
<feature type="modified residue" description="N6-acetyllysine" evidence="18">
    <location>
        <position position="102"/>
    </location>
</feature>
<feature type="modified residue" description="Phosphothreonine" evidence="3">
    <location>
        <position position="106"/>
    </location>
</feature>
<feature type="modified residue" description="N6-acetyllysine" evidence="18">
    <location>
        <position position="109"/>
    </location>
</feature>
<feature type="modified residue" description="N6-acetyllysine" evidence="18">
    <location>
        <position position="116"/>
    </location>
</feature>
<feature type="modified residue" description="Phosphothreonine" evidence="3">
    <location>
        <position position="121"/>
    </location>
</feature>
<feature type="modified residue" description="N6-acetyllysine" evidence="3">
    <location>
        <position position="124"/>
    </location>
</feature>
<feature type="modified residue" description="Phosphoserine" evidence="14 15 17">
    <location>
        <position position="145"/>
    </location>
</feature>
<feature type="modified residue" description="Phosphoserine" evidence="15 17">
    <location>
        <position position="157"/>
    </location>
</feature>
<feature type="modified residue" description="Phosphoserine" evidence="17">
    <location>
        <position position="189"/>
    </location>
</feature>
<feature type="modified residue" description="Phosphoserine" evidence="17">
    <location>
        <position position="212"/>
    </location>
</feature>
<feature type="modified residue" description="Phosphothreonine" evidence="3">
    <location>
        <position position="220"/>
    </location>
</feature>
<feature type="modified residue" description="Phosphoserine" evidence="17">
    <location>
        <position position="303"/>
    </location>
</feature>
<feature type="modified residue" description="N6-acetyllysine" evidence="3">
    <location>
        <position position="320"/>
    </location>
</feature>
<feature type="modified residue" description="N6-acetyllysine" evidence="18">
    <location>
        <position position="350"/>
    </location>
</feature>
<feature type="modified residue" description="Phosphoserine" evidence="3">
    <location>
        <position position="358"/>
    </location>
</feature>
<feature type="modified residue" description="Phosphothreonine" evidence="3">
    <location>
        <position position="369"/>
    </location>
</feature>
<feature type="modified residue" description="N6-acetyllysine; alternate" evidence="3">
    <location>
        <position position="379"/>
    </location>
</feature>
<feature type="modified residue" description="N6-acetyllysine" evidence="3">
    <location>
        <position position="400"/>
    </location>
</feature>
<feature type="modified residue" description="Phosphoserine" evidence="16 17">
    <location>
        <position position="403"/>
    </location>
</feature>
<feature type="modified residue" description="Phosphothreonine" evidence="3">
    <location>
        <position position="407"/>
    </location>
</feature>
<feature type="modified residue" description="N6-acetyllysine" evidence="18">
    <location>
        <position position="429"/>
    </location>
</feature>
<feature type="modified residue" description="N6-acetyllysine" evidence="18">
    <location>
        <position position="446"/>
    </location>
</feature>
<feature type="modified residue" description="Phosphoserine" evidence="17">
    <location>
        <position position="460"/>
    </location>
</feature>
<feature type="modified residue" description="Phosphoserine" evidence="3">
    <location>
        <position position="462"/>
    </location>
</feature>
<feature type="modified residue" description="N6-acetyllysine" evidence="18">
    <location>
        <position position="469"/>
    </location>
</feature>
<feature type="modified residue" description="N6-acetyllysine" evidence="18">
    <location>
        <position position="478"/>
    </location>
</feature>
<feature type="modified residue" description="N6-acetyllysine; alternate" evidence="3">
    <location>
        <position position="514"/>
    </location>
</feature>
<feature type="modified residue" description="N6-acetyllysine" evidence="18">
    <location>
        <position position="522"/>
    </location>
</feature>
<feature type="modified residue" description="N6-acetyllysine" evidence="3">
    <location>
        <position position="569"/>
    </location>
</feature>
<feature type="modified residue" description="N6-acetyllysine; alternate" evidence="18">
    <location>
        <position position="574"/>
    </location>
</feature>
<feature type="modified residue" description="Phosphoserine" evidence="3">
    <location>
        <position position="577"/>
    </location>
</feature>
<feature type="modified residue" description="Phosphoserine" evidence="3">
    <location>
        <position position="588"/>
    </location>
</feature>
<feature type="modified residue" description="Phosphoserine" evidence="17">
    <location>
        <position position="616"/>
    </location>
</feature>
<feature type="modified residue" description="N6-acetyllysine" evidence="18">
    <location>
        <position position="643"/>
    </location>
</feature>
<feature type="modified residue" description="Asymmetric dimethylarginine" evidence="2">
    <location>
        <position position="653"/>
    </location>
</feature>
<feature type="modified residue" description="Asymmetric dimethylarginine" evidence="2">
    <location>
        <position position="657"/>
    </location>
</feature>
<feature type="modified residue" description="Asymmetric dimethylarginine" evidence="2">
    <location>
        <position position="663"/>
    </location>
</feature>
<feature type="modified residue" description="Asymmetric dimethylarginine" evidence="2">
    <location>
        <position position="667"/>
    </location>
</feature>
<feature type="modified residue" description="Asymmetric dimethylarginine" evidence="2">
    <location>
        <position position="670"/>
    </location>
</feature>
<feature type="modified residue" description="Asymmetric dimethylarginine" evidence="2">
    <location>
        <position position="676"/>
    </location>
</feature>
<feature type="modified residue" description="Asymmetric dimethylarginine" evidence="2">
    <location>
        <position position="678"/>
    </location>
</feature>
<feature type="modified residue" description="Asymmetric dimethylarginine" evidence="2">
    <location>
        <position position="684"/>
    </location>
</feature>
<feature type="modified residue" description="Asymmetric dimethylarginine" evidence="2">
    <location>
        <position position="688"/>
    </location>
</feature>
<feature type="modified residue" description="Asymmetric dimethylarginine; alternate" evidence="2">
    <location>
        <position position="691"/>
    </location>
</feature>
<feature type="modified residue" description="Omega-N-methylarginine; alternate" evidence="19">
    <location>
        <position position="691"/>
    </location>
</feature>
<feature type="cross-link" description="Glycyl lysine isopeptide (Lys-Gly) (interchain with G-Cter in SUMO1); alternate" evidence="3">
    <location>
        <position position="299"/>
    </location>
</feature>
<feature type="cross-link" description="Glycyl lysine isopeptide (Lys-Gly) (interchain with G-Cter in SUMO2); alternate" evidence="3">
    <location>
        <position position="299"/>
    </location>
</feature>
<feature type="cross-link" description="Glycyl lysine isopeptide (Lys-Gly) (interchain with G-Cter in SUMO1); alternate" evidence="3">
    <location>
        <position position="326"/>
    </location>
</feature>
<feature type="cross-link" description="Glycyl lysine isopeptide (Lys-Gly) (interchain with G-Cter in SUMO2); alternate" evidence="3">
    <location>
        <position position="326"/>
    </location>
</feature>
<feature type="cross-link" description="Glycyl lysine isopeptide (Lys-Gly) (interchain with G-Cter in SUMO2)" evidence="3">
    <location>
        <position position="372"/>
    </location>
</feature>
<feature type="cross-link" description="Glycyl lysine isopeptide (Lys-Gly) (interchain with G-Cter in SUMO2); alternate" evidence="3">
    <location>
        <position position="379"/>
    </location>
</feature>
<feature type="cross-link" description="Glycyl lysine isopeptide (Lys-Gly) (interchain with G-Cter in SUMO2); alternate" evidence="3">
    <location>
        <position position="514"/>
    </location>
</feature>
<feature type="cross-link" description="Glycyl lysine isopeptide (Lys-Gly) (interchain with G-Cter in SUMO2); alternate" evidence="3">
    <location>
        <position position="574"/>
    </location>
</feature>
<feature type="cross-link" description="Glycyl lysine isopeptide (Lys-Gly) (interchain with G-Cter in SUMO1); alternate" evidence="3">
    <location>
        <position position="586"/>
    </location>
</feature>
<feature type="cross-link" description="Glycyl lysine isopeptide (Lys-Gly) (interchain with G-Cter in SUMO2); alternate" evidence="3">
    <location>
        <position position="586"/>
    </location>
</feature>
<feature type="cross-link" description="Glycyl lysine isopeptide (Lys-Gly) (interchain with G-Cter in SUMO2)" evidence="3">
    <location>
        <position position="621"/>
    </location>
</feature>
<feature type="sequence conflict" description="In Ref. 3; AAH05460." evidence="13" ref="3">
    <original>D</original>
    <variation>E</variation>
    <location>
        <position position="155"/>
    </location>
</feature>
<feature type="sequence conflict" description="In Ref. 3; AAH05460." evidence="13" ref="3">
    <original>DD</original>
    <variation>EE</variation>
    <location>
        <begin position="203"/>
        <end position="204"/>
    </location>
</feature>
<feature type="sequence conflict" description="In Ref. 3; AAH05460." evidence="13" ref="3">
    <original>D</original>
    <variation>E</variation>
    <location>
        <position position="245"/>
    </location>
</feature>